<gene>
    <name evidence="1" type="primary">rlmN</name>
    <name type="ORF">SPICI16_042</name>
</gene>
<sequence>MTSIFGYPKEELQLDLVAHGFKKYLAEQIFDWIYVKNIYSFDEMTNISKTDRNKLQEYYTIEPLKIVVQQQSKDWTVKFLFQLADGYKIETVLMPQSYGNSVCVTTQVGCNMACTFCASGLLKKTRNLSTAEIVQQVMMVNRYLATTNERVSHIVVMGIGEPFDNFDNTLKFVNIINDPKGYQIGARHITISTCGLVPKIKQFAELKTQVNLAISLHAPNNTIRNQLMPINKAYPVEKLMDAVRYYIELTNRRVTFEYILIENVNDSRETALELAKLIRGLNAYVNLIPYNTVAENGHQRSTKINKFFETLQQQKINCIVRREFGHDIDAACGQLRAKNEGVIRK</sequence>
<feature type="chain" id="PRO_0000350425" description="Probable dual-specificity RNA methyltransferase RlmN">
    <location>
        <begin position="1"/>
        <end position="345"/>
    </location>
</feature>
<feature type="domain" description="Radical SAM core" evidence="2">
    <location>
        <begin position="96"/>
        <end position="327"/>
    </location>
</feature>
<feature type="active site" description="Proton acceptor" evidence="1">
    <location>
        <position position="90"/>
    </location>
</feature>
<feature type="active site" description="S-methylcysteine intermediate" evidence="1">
    <location>
        <position position="332"/>
    </location>
</feature>
<feature type="binding site" evidence="1">
    <location>
        <position position="110"/>
    </location>
    <ligand>
        <name>[4Fe-4S] cluster</name>
        <dbReference type="ChEBI" id="CHEBI:49883"/>
        <note>4Fe-4S-S-AdoMet</note>
    </ligand>
</feature>
<feature type="binding site" evidence="1">
    <location>
        <position position="114"/>
    </location>
    <ligand>
        <name>[4Fe-4S] cluster</name>
        <dbReference type="ChEBI" id="CHEBI:49883"/>
        <note>4Fe-4S-S-AdoMet</note>
    </ligand>
</feature>
<feature type="binding site" evidence="1">
    <location>
        <position position="117"/>
    </location>
    <ligand>
        <name>[4Fe-4S] cluster</name>
        <dbReference type="ChEBI" id="CHEBI:49883"/>
        <note>4Fe-4S-S-AdoMet</note>
    </ligand>
</feature>
<feature type="binding site" evidence="1">
    <location>
        <begin position="160"/>
        <end position="161"/>
    </location>
    <ligand>
        <name>S-adenosyl-L-methionine</name>
        <dbReference type="ChEBI" id="CHEBI:59789"/>
    </ligand>
</feature>
<feature type="binding site" evidence="1">
    <location>
        <position position="192"/>
    </location>
    <ligand>
        <name>S-adenosyl-L-methionine</name>
        <dbReference type="ChEBI" id="CHEBI:59789"/>
    </ligand>
</feature>
<feature type="binding site" evidence="1">
    <location>
        <begin position="215"/>
        <end position="217"/>
    </location>
    <ligand>
        <name>S-adenosyl-L-methionine</name>
        <dbReference type="ChEBI" id="CHEBI:59789"/>
    </ligand>
</feature>
<feature type="binding site" evidence="1">
    <location>
        <position position="291"/>
    </location>
    <ligand>
        <name>S-adenosyl-L-methionine</name>
        <dbReference type="ChEBI" id="CHEBI:59789"/>
    </ligand>
</feature>
<feature type="disulfide bond" description="(transient)" evidence="1">
    <location>
        <begin position="103"/>
        <end position="332"/>
    </location>
</feature>
<proteinExistence type="inferred from homology"/>
<evidence type="ECO:0000255" key="1">
    <source>
        <dbReference type="HAMAP-Rule" id="MF_01849"/>
    </source>
</evidence>
<evidence type="ECO:0000255" key="2">
    <source>
        <dbReference type="PROSITE-ProRule" id="PRU01266"/>
    </source>
</evidence>
<keyword id="KW-0004">4Fe-4S</keyword>
<keyword id="KW-0963">Cytoplasm</keyword>
<keyword id="KW-1015">Disulfide bond</keyword>
<keyword id="KW-0408">Iron</keyword>
<keyword id="KW-0411">Iron-sulfur</keyword>
<keyword id="KW-0479">Metal-binding</keyword>
<keyword id="KW-0489">Methyltransferase</keyword>
<keyword id="KW-0698">rRNA processing</keyword>
<keyword id="KW-0949">S-adenosyl-L-methionine</keyword>
<keyword id="KW-0808">Transferase</keyword>
<keyword id="KW-0819">tRNA processing</keyword>
<reference key="1">
    <citation type="journal article" date="2003" name="Microbiology">
        <title>Glucose and trehalose PTS permeases of Spiroplasma citri probably share a single IIA domain, enabling the spiroplasma to adapt quickly to carbohydrate changes in its environment.</title>
        <authorList>
            <person name="Andre A."/>
            <person name="Maccheroni W."/>
            <person name="Doignon F."/>
            <person name="Garnier M."/>
            <person name="Renaudin J."/>
        </authorList>
    </citation>
    <scope>NUCLEOTIDE SEQUENCE [GENOMIC DNA]</scope>
    <source>
        <strain>GII-3</strain>
    </source>
</reference>
<reference key="2">
    <citation type="submission" date="2006-06" db="EMBL/GenBank/DDBJ databases">
        <title>The partial chromosome sequence of Spiroplasma citri GII3-3X.</title>
        <authorList>
            <person name="Carle P."/>
            <person name="Saillard C."/>
            <person name="Blanchard A."/>
            <person name="Carrere N."/>
            <person name="Carrere S."/>
            <person name="Duret S."/>
            <person name="Eveillard S."/>
            <person name="Gaurivaud P."/>
            <person name="Gourgues G."/>
            <person name="Gouzy J."/>
            <person name="Henry A."/>
            <person name="Salar P."/>
            <person name="Laigret F."/>
            <person name="Bove J.M."/>
            <person name="Renaudin J."/>
            <person name="Foissac X."/>
        </authorList>
    </citation>
    <scope>NUCLEOTIDE SEQUENCE [GENOMIC DNA]</scope>
    <source>
        <strain>GII-3-3X</strain>
    </source>
</reference>
<organism>
    <name type="scientific">Spiroplasma citri</name>
    <dbReference type="NCBI Taxonomy" id="2133"/>
    <lineage>
        <taxon>Bacteria</taxon>
        <taxon>Bacillati</taxon>
        <taxon>Mycoplasmatota</taxon>
        <taxon>Mollicutes</taxon>
        <taxon>Entomoplasmatales</taxon>
        <taxon>Spiroplasmataceae</taxon>
        <taxon>Spiroplasma</taxon>
    </lineage>
</organism>
<name>RLMN_SPICI</name>
<protein>
    <recommendedName>
        <fullName evidence="1">Probable dual-specificity RNA methyltransferase RlmN</fullName>
        <ecNumber evidence="1">2.1.1.192</ecNumber>
    </recommendedName>
    <alternativeName>
        <fullName evidence="1">23S rRNA (adenine(2503)-C(2))-methyltransferase</fullName>
    </alternativeName>
    <alternativeName>
        <fullName evidence="1">23S rRNA m2A2503 methyltransferase</fullName>
    </alternativeName>
    <alternativeName>
        <fullName evidence="1">Ribosomal RNA large subunit methyltransferase N</fullName>
    </alternativeName>
    <alternativeName>
        <fullName evidence="1">tRNA (adenine(37)-C(2))-methyltransferase</fullName>
    </alternativeName>
    <alternativeName>
        <fullName evidence="1">tRNA m2A37 methyltransferase</fullName>
    </alternativeName>
</protein>
<accession>Q6XK03</accession>
<dbReference type="EC" id="2.1.1.192" evidence="1"/>
<dbReference type="EMBL" id="AY230007">
    <property type="protein sequence ID" value="AAP55653.1"/>
    <property type="molecule type" value="Genomic_DNA"/>
</dbReference>
<dbReference type="EMBL" id="AM285317">
    <property type="protein sequence ID" value="CAK99567.1"/>
    <property type="molecule type" value="Genomic_DNA"/>
</dbReference>
<dbReference type="RefSeq" id="WP_071937845.1">
    <property type="nucleotide sequence ID" value="NZ_CP013197.1"/>
</dbReference>
<dbReference type="SMR" id="Q6XK03"/>
<dbReference type="STRING" id="2133.SCITRI_001575"/>
<dbReference type="GeneID" id="54239407"/>
<dbReference type="OrthoDB" id="9793973at2"/>
<dbReference type="GO" id="GO:0005737">
    <property type="term" value="C:cytoplasm"/>
    <property type="evidence" value="ECO:0007669"/>
    <property type="project" value="UniProtKB-SubCell"/>
</dbReference>
<dbReference type="GO" id="GO:0051539">
    <property type="term" value="F:4 iron, 4 sulfur cluster binding"/>
    <property type="evidence" value="ECO:0007669"/>
    <property type="project" value="UniProtKB-UniRule"/>
</dbReference>
<dbReference type="GO" id="GO:0046872">
    <property type="term" value="F:metal ion binding"/>
    <property type="evidence" value="ECO:0007669"/>
    <property type="project" value="UniProtKB-KW"/>
</dbReference>
<dbReference type="GO" id="GO:0070040">
    <property type="term" value="F:rRNA (adenine(2503)-C2-)-methyltransferase activity"/>
    <property type="evidence" value="ECO:0007669"/>
    <property type="project" value="UniProtKB-UniRule"/>
</dbReference>
<dbReference type="GO" id="GO:0019843">
    <property type="term" value="F:rRNA binding"/>
    <property type="evidence" value="ECO:0007669"/>
    <property type="project" value="UniProtKB-UniRule"/>
</dbReference>
<dbReference type="GO" id="GO:0002935">
    <property type="term" value="F:tRNA (adenine(37)-C2)-methyltransferase activity"/>
    <property type="evidence" value="ECO:0007669"/>
    <property type="project" value="UniProtKB-UniRule"/>
</dbReference>
<dbReference type="GO" id="GO:0000049">
    <property type="term" value="F:tRNA binding"/>
    <property type="evidence" value="ECO:0007669"/>
    <property type="project" value="UniProtKB-UniRule"/>
</dbReference>
<dbReference type="GO" id="GO:0070475">
    <property type="term" value="P:rRNA base methylation"/>
    <property type="evidence" value="ECO:0007669"/>
    <property type="project" value="UniProtKB-UniRule"/>
</dbReference>
<dbReference type="GO" id="GO:0030488">
    <property type="term" value="P:tRNA methylation"/>
    <property type="evidence" value="ECO:0007669"/>
    <property type="project" value="UniProtKB-UniRule"/>
</dbReference>
<dbReference type="CDD" id="cd01335">
    <property type="entry name" value="Radical_SAM"/>
    <property type="match status" value="1"/>
</dbReference>
<dbReference type="FunFam" id="3.20.20.70:FF:000014">
    <property type="entry name" value="Probable dual-specificity RNA methyltransferase RlmN"/>
    <property type="match status" value="1"/>
</dbReference>
<dbReference type="Gene3D" id="1.10.150.530">
    <property type="match status" value="1"/>
</dbReference>
<dbReference type="Gene3D" id="3.20.20.70">
    <property type="entry name" value="Aldolase class I"/>
    <property type="match status" value="1"/>
</dbReference>
<dbReference type="HAMAP" id="MF_01849">
    <property type="entry name" value="RNA_methyltr_RlmN"/>
    <property type="match status" value="1"/>
</dbReference>
<dbReference type="InterPro" id="IPR013785">
    <property type="entry name" value="Aldolase_TIM"/>
</dbReference>
<dbReference type="InterPro" id="IPR040072">
    <property type="entry name" value="Methyltransferase_A"/>
</dbReference>
<dbReference type="InterPro" id="IPR048641">
    <property type="entry name" value="RlmN_N"/>
</dbReference>
<dbReference type="InterPro" id="IPR027492">
    <property type="entry name" value="RNA_MTrfase_RlmN"/>
</dbReference>
<dbReference type="InterPro" id="IPR004383">
    <property type="entry name" value="rRNA_lsu_MTrfase_RlmN/Cfr"/>
</dbReference>
<dbReference type="InterPro" id="IPR007197">
    <property type="entry name" value="rSAM"/>
</dbReference>
<dbReference type="NCBIfam" id="TIGR00048">
    <property type="entry name" value="rRNA_mod_RlmN"/>
    <property type="match status" value="1"/>
</dbReference>
<dbReference type="PANTHER" id="PTHR30544">
    <property type="entry name" value="23S RRNA METHYLTRANSFERASE"/>
    <property type="match status" value="1"/>
</dbReference>
<dbReference type="PANTHER" id="PTHR30544:SF5">
    <property type="entry name" value="RADICAL SAM CORE DOMAIN-CONTAINING PROTEIN"/>
    <property type="match status" value="1"/>
</dbReference>
<dbReference type="Pfam" id="PF04055">
    <property type="entry name" value="Radical_SAM"/>
    <property type="match status" value="1"/>
</dbReference>
<dbReference type="Pfam" id="PF21016">
    <property type="entry name" value="RlmN_N"/>
    <property type="match status" value="1"/>
</dbReference>
<dbReference type="PIRSF" id="PIRSF006004">
    <property type="entry name" value="CHP00048"/>
    <property type="match status" value="1"/>
</dbReference>
<dbReference type="SFLD" id="SFLDF00275">
    <property type="entry name" value="adenosine_C2_methyltransferase"/>
    <property type="match status" value="1"/>
</dbReference>
<dbReference type="SFLD" id="SFLDS00029">
    <property type="entry name" value="Radical_SAM"/>
    <property type="match status" value="1"/>
</dbReference>
<dbReference type="SUPFAM" id="SSF102114">
    <property type="entry name" value="Radical SAM enzymes"/>
    <property type="match status" value="1"/>
</dbReference>
<dbReference type="PROSITE" id="PS51918">
    <property type="entry name" value="RADICAL_SAM"/>
    <property type="match status" value="1"/>
</dbReference>
<comment type="function">
    <text evidence="1">Specifically methylates position 2 of adenine 2503 in 23S rRNA and position 2 of adenine 37 in tRNAs.</text>
</comment>
<comment type="catalytic activity">
    <reaction evidence="1">
        <text>adenosine(2503) in 23S rRNA + 2 reduced [2Fe-2S]-[ferredoxin] + 2 S-adenosyl-L-methionine = 2-methyladenosine(2503) in 23S rRNA + 5'-deoxyadenosine + L-methionine + 2 oxidized [2Fe-2S]-[ferredoxin] + S-adenosyl-L-homocysteine</text>
        <dbReference type="Rhea" id="RHEA:42916"/>
        <dbReference type="Rhea" id="RHEA-COMP:10000"/>
        <dbReference type="Rhea" id="RHEA-COMP:10001"/>
        <dbReference type="Rhea" id="RHEA-COMP:10152"/>
        <dbReference type="Rhea" id="RHEA-COMP:10282"/>
        <dbReference type="ChEBI" id="CHEBI:17319"/>
        <dbReference type="ChEBI" id="CHEBI:33737"/>
        <dbReference type="ChEBI" id="CHEBI:33738"/>
        <dbReference type="ChEBI" id="CHEBI:57844"/>
        <dbReference type="ChEBI" id="CHEBI:57856"/>
        <dbReference type="ChEBI" id="CHEBI:59789"/>
        <dbReference type="ChEBI" id="CHEBI:74411"/>
        <dbReference type="ChEBI" id="CHEBI:74497"/>
        <dbReference type="EC" id="2.1.1.192"/>
    </reaction>
</comment>
<comment type="catalytic activity">
    <reaction evidence="1">
        <text>adenosine(37) in tRNA + 2 reduced [2Fe-2S]-[ferredoxin] + 2 S-adenosyl-L-methionine = 2-methyladenosine(37) in tRNA + 5'-deoxyadenosine + L-methionine + 2 oxidized [2Fe-2S]-[ferredoxin] + S-adenosyl-L-homocysteine</text>
        <dbReference type="Rhea" id="RHEA:43332"/>
        <dbReference type="Rhea" id="RHEA-COMP:10000"/>
        <dbReference type="Rhea" id="RHEA-COMP:10001"/>
        <dbReference type="Rhea" id="RHEA-COMP:10162"/>
        <dbReference type="Rhea" id="RHEA-COMP:10485"/>
        <dbReference type="ChEBI" id="CHEBI:17319"/>
        <dbReference type="ChEBI" id="CHEBI:33737"/>
        <dbReference type="ChEBI" id="CHEBI:33738"/>
        <dbReference type="ChEBI" id="CHEBI:57844"/>
        <dbReference type="ChEBI" id="CHEBI:57856"/>
        <dbReference type="ChEBI" id="CHEBI:59789"/>
        <dbReference type="ChEBI" id="CHEBI:74411"/>
        <dbReference type="ChEBI" id="CHEBI:74497"/>
        <dbReference type="EC" id="2.1.1.192"/>
    </reaction>
</comment>
<comment type="cofactor">
    <cofactor evidence="1">
        <name>[4Fe-4S] cluster</name>
        <dbReference type="ChEBI" id="CHEBI:49883"/>
    </cofactor>
    <text evidence="1">Binds 1 [4Fe-4S] cluster. The cluster is coordinated with 3 cysteines and an exchangeable S-adenosyl-L-methionine.</text>
</comment>
<comment type="subcellular location">
    <subcellularLocation>
        <location evidence="1">Cytoplasm</location>
    </subcellularLocation>
</comment>
<comment type="miscellaneous">
    <text evidence="1">Reaction proceeds by a ping-pong mechanism involving intermediate methylation of a conserved cysteine residue.</text>
</comment>
<comment type="similarity">
    <text evidence="1">Belongs to the radical SAM superfamily. RlmN family.</text>
</comment>